<comment type="subcellular location">
    <subcellularLocation>
        <location evidence="1">Cell inner membrane</location>
        <topology evidence="1">Multi-pass membrane protein</topology>
    </subcellularLocation>
</comment>
<comment type="similarity">
    <text evidence="1">Belongs to the UPF0283 family.</text>
</comment>
<reference key="1">
    <citation type="journal article" date="2005" name="Nucleic Acids Res.">
        <title>The genome sequence of Salmonella enterica serovar Choleraesuis, a highly invasive and resistant zoonotic pathogen.</title>
        <authorList>
            <person name="Chiu C.-H."/>
            <person name="Tang P."/>
            <person name="Chu C."/>
            <person name="Hu S."/>
            <person name="Bao Q."/>
            <person name="Yu J."/>
            <person name="Chou Y.-Y."/>
            <person name="Wang H.-S."/>
            <person name="Lee Y.-S."/>
        </authorList>
    </citation>
    <scope>NUCLEOTIDE SEQUENCE [LARGE SCALE GENOMIC DNA]</scope>
    <source>
        <strain>SC-B67</strain>
    </source>
</reference>
<name>YCJF_SALCH</name>
<gene>
    <name evidence="1" type="primary">ycjF</name>
    <name type="ordered locus">SCH_1677</name>
</gene>
<organism>
    <name type="scientific">Salmonella choleraesuis (strain SC-B67)</name>
    <dbReference type="NCBI Taxonomy" id="321314"/>
    <lineage>
        <taxon>Bacteria</taxon>
        <taxon>Pseudomonadati</taxon>
        <taxon>Pseudomonadota</taxon>
        <taxon>Gammaproteobacteria</taxon>
        <taxon>Enterobacterales</taxon>
        <taxon>Enterobacteriaceae</taxon>
        <taxon>Salmonella</taxon>
    </lineage>
</organism>
<proteinExistence type="inferred from homology"/>
<protein>
    <recommendedName>
        <fullName evidence="1">UPF0283 membrane protein YcjF</fullName>
    </recommendedName>
</protein>
<accession>Q57NX8</accession>
<dbReference type="EMBL" id="AE017220">
    <property type="protein sequence ID" value="AAX65583.1"/>
    <property type="molecule type" value="Genomic_DNA"/>
</dbReference>
<dbReference type="RefSeq" id="WP_001540144.1">
    <property type="nucleotide sequence ID" value="NC_006905.1"/>
</dbReference>
<dbReference type="KEGG" id="sec:SCH_1677"/>
<dbReference type="HOGENOM" id="CLU_057693_2_0_6"/>
<dbReference type="Proteomes" id="UP000000538">
    <property type="component" value="Chromosome"/>
</dbReference>
<dbReference type="GO" id="GO:0005886">
    <property type="term" value="C:plasma membrane"/>
    <property type="evidence" value="ECO:0007669"/>
    <property type="project" value="UniProtKB-SubCell"/>
</dbReference>
<dbReference type="HAMAP" id="MF_01085">
    <property type="entry name" value="UPF0283"/>
    <property type="match status" value="1"/>
</dbReference>
<dbReference type="InterPro" id="IPR021147">
    <property type="entry name" value="DUF697"/>
</dbReference>
<dbReference type="InterPro" id="IPR006507">
    <property type="entry name" value="UPF0283"/>
</dbReference>
<dbReference type="NCBIfam" id="TIGR01620">
    <property type="entry name" value="hyp_HI0043"/>
    <property type="match status" value="1"/>
</dbReference>
<dbReference type="PANTHER" id="PTHR39342">
    <property type="entry name" value="UPF0283 MEMBRANE PROTEIN YCJF"/>
    <property type="match status" value="1"/>
</dbReference>
<dbReference type="PANTHER" id="PTHR39342:SF1">
    <property type="entry name" value="UPF0283 MEMBRANE PROTEIN YCJF"/>
    <property type="match status" value="1"/>
</dbReference>
<dbReference type="Pfam" id="PF05128">
    <property type="entry name" value="DUF697"/>
    <property type="match status" value="1"/>
</dbReference>
<feature type="chain" id="PRO_1000064847" description="UPF0283 membrane protein YcjF">
    <location>
        <begin position="1"/>
        <end position="353"/>
    </location>
</feature>
<feature type="transmembrane region" description="Helical" evidence="1">
    <location>
        <begin position="70"/>
        <end position="90"/>
    </location>
</feature>
<feature type="transmembrane region" description="Helical" evidence="1">
    <location>
        <begin position="100"/>
        <end position="120"/>
    </location>
</feature>
<feature type="transmembrane region" description="Helical" evidence="1">
    <location>
        <begin position="213"/>
        <end position="233"/>
    </location>
</feature>
<feature type="region of interest" description="Disordered" evidence="2">
    <location>
        <begin position="1"/>
        <end position="35"/>
    </location>
</feature>
<feature type="compositionally biased region" description="Basic and acidic residues" evidence="2">
    <location>
        <begin position="1"/>
        <end position="19"/>
    </location>
</feature>
<keyword id="KW-0997">Cell inner membrane</keyword>
<keyword id="KW-1003">Cell membrane</keyword>
<keyword id="KW-0472">Membrane</keyword>
<keyword id="KW-0812">Transmembrane</keyword>
<keyword id="KW-1133">Transmembrane helix</keyword>
<evidence type="ECO:0000255" key="1">
    <source>
        <dbReference type="HAMAP-Rule" id="MF_01085"/>
    </source>
</evidence>
<evidence type="ECO:0000256" key="2">
    <source>
        <dbReference type="SAM" id="MobiDB-lite"/>
    </source>
</evidence>
<sequence length="353" mass="39291">MSEPLKPRIDFAEPLKEEPTSAFKAQQTFSEAESRTFAPAAIDERPEDEGVAEAAVDAALRPKRSLWRKMVMGGLALFGASVVGQGLQWTMNAWQTQDWVALGGCAAGALIIGAGVGSVVTEWRRLWRLRQRAHERDEARELLHSHSVGKGRAFCEKLAQQAGIDQSHPALQRWYAAIHETQNDREVVGLYAHLVQPVLDAQARREISRFAAESTLMIAVSPLALVDMAFIAWRNLRLINRIATLYGIELGYYSRLRLFRLVLLNIAFAGASELVREVGMDWMSQDLAARLSTRAAQGIGAGLLTARLGIKAMELCRPLPWIDNDKPRLGDFRRQLIGQLKETLQKSKSSPEK</sequence>